<feature type="chain" id="PRO_0000219225" description="CD81 protein">
    <location>
        <begin position="1"/>
        <end position="236"/>
    </location>
</feature>
<feature type="topological domain" description="Cytoplasmic" evidence="4">
    <location>
        <begin position="1"/>
        <end position="12"/>
    </location>
</feature>
<feature type="transmembrane region" description="Helical" evidence="2">
    <location>
        <begin position="13"/>
        <end position="33"/>
    </location>
</feature>
<feature type="topological domain" description="Extracellular" evidence="4">
    <location>
        <begin position="34"/>
        <end position="63"/>
    </location>
</feature>
<feature type="transmembrane region" description="Helical" evidence="2">
    <location>
        <begin position="64"/>
        <end position="84"/>
    </location>
</feature>
<feature type="topological domain" description="Cytoplasmic" evidence="4">
    <location>
        <begin position="85"/>
        <end position="89"/>
    </location>
</feature>
<feature type="transmembrane region" description="Helical" evidence="2">
    <location>
        <begin position="90"/>
        <end position="112"/>
    </location>
</feature>
<feature type="topological domain" description="Extracellular" evidence="4">
    <location>
        <begin position="113"/>
        <end position="201"/>
    </location>
</feature>
<feature type="transmembrane region" description="Helical" evidence="2">
    <location>
        <begin position="202"/>
        <end position="224"/>
    </location>
</feature>
<feature type="topological domain" description="Cytoplasmic" evidence="4">
    <location>
        <begin position="225"/>
        <end position="236"/>
    </location>
</feature>
<feature type="binding site" evidence="2">
    <location>
        <position position="219"/>
    </location>
    <ligand>
        <name>cholesterol</name>
        <dbReference type="ChEBI" id="CHEBI:16113"/>
    </ligand>
</feature>
<feature type="site" description="Important for interaction with integrin" evidence="2">
    <location>
        <position position="116"/>
    </location>
</feature>
<feature type="site" description="Important for interaction with integrin" evidence="2">
    <location>
        <position position="144"/>
    </location>
</feature>
<feature type="site" description="Important for interaction with integrin" evidence="2">
    <location>
        <position position="148"/>
    </location>
</feature>
<feature type="disulfide bond" evidence="2">
    <location>
        <begin position="156"/>
        <end position="190"/>
    </location>
</feature>
<feature type="disulfide bond" evidence="2">
    <location>
        <begin position="157"/>
        <end position="175"/>
    </location>
</feature>
<feature type="helix" evidence="5">
    <location>
        <begin position="116"/>
        <end position="135"/>
    </location>
</feature>
<feature type="strand" evidence="5">
    <location>
        <begin position="139"/>
        <end position="141"/>
    </location>
</feature>
<feature type="helix" evidence="5">
    <location>
        <begin position="143"/>
        <end position="154"/>
    </location>
</feature>
<feature type="helix" evidence="5">
    <location>
        <begin position="160"/>
        <end position="165"/>
    </location>
</feature>
<feature type="helix" evidence="5">
    <location>
        <begin position="166"/>
        <end position="171"/>
    </location>
</feature>
<feature type="helix" evidence="5">
    <location>
        <begin position="181"/>
        <end position="186"/>
    </location>
</feature>
<feature type="helix" evidence="5">
    <location>
        <begin position="190"/>
        <end position="199"/>
    </location>
</feature>
<sequence>MGVEGCTKCIKYLLFVFNFVFWLAGGVILGVALWLRHDPQTTNLLYLELGDKPAPNTFYVGIYILIAVGAVMMFVGFLGCYGAIQESQCLLGTFFTCLVILFACEVAAGIWGFVNKDQIAKDVKQFYDQALQQAVVDDDANNAKAVVKTFHETLNCCGSSTLSALTTSMLKNNLCPSGSSIISNLFKEDCHQKIDELFSGKLYLIGIAAIVVAVIMIFEMILSMVLCCGIRNSSVY</sequence>
<accession>Q9N0J9</accession>
<proteinExistence type="evidence at protein level"/>
<comment type="function">
    <text evidence="1 2">Structural component of specialized membrane microdomains known as tetraspanin-enriched microdomains (TERMs), which act as platforms for receptor clustering and signaling. Essential for trafficking and compartmentalization of CD19 receptor on the surface of activated B cells. Upon initial encounter with microbial pathogens, enables the assembly of CD19-CR2/CD21 and B cell receptor (BCR) complexes at signaling TERMs, lowering the threshold dose of antigen required to trigger B cell clonal expansion and antibody production. In T cells, facilitates the localization of CD247/CD3 zeta at antigen-induced synapses with B cells, providing for costimulation and polarization toward T helper type 2 phenotype. Present in MHC class II compartments, may also play a role in antigen presentation (By similarity). Can act both as positive and negative regulator of homotypic or heterotypic cell-cell fusion processes. Positively regulates sperm-egg fusion and may be involved in acrosome reaction. In myoblasts, associates with CD9 and PTGFRN and inhibits myotube fusion during muscle regeneration (By similarity). In macrophages, associates with CD9 and beta-1 and beta-2 integrins, and prevents macrophage fusion into multinucleated giant cells specialized in ingesting complement-opsonized large particles (By similarity). Also prevents the fusion of mononuclear cell progenitors into osteoclasts in charge of bone resorption (By similarity). May regulate the compartmentalization of enzymatic activities. In T cells, defines the subcellular localization of dNTPase SAMHD1 and permits its degradation by the proteasome, thereby controlling intracellular dNTP levels (By similarity). Also involved in cell adhesion and motility. Positively regulates integrin-mediated adhesion of macrophages, particularly relevant for the inflammatory response in the lung (By similarity).</text>
</comment>
<comment type="subunit">
    <text evidence="1 2">Homodimer. Part of a complex composed of CD19, CR2/CD21, CD81 and IFITM1/CD225 in the membrane of mature B cells. Interacts (via the second extracellular domain) with CD19; this interaction is initiated early during biosynthesis in the ER and enables trafficking of only properly folded CD19. Part of a complex that includes MHC class II/HLA-DR molecules and IFITM1. Interacts with IFITM1 (By similarity). Interacts with IFITM2 and IFITM3 (By similarity). Part of integrin-tetraspanin complex composed of CD9, CD81, beta-1 and beta-2 integrins in the membrane of monocyte/macrophages. Interacts (via the second extracellular domain) with integrin ITGAV:ITGB3. Interacts with CD247/CD3 zeta, ICAM1 and CD9 at the immune synapse on T cell membrane (By similarity). Part of a GPCR-tetraspanin complex consisting at least of ADGRG1, CD81, possibly CD9, and GNA11 in which CD81 enhances the association of ADGRG1 with GNA11. Part of a complex composed of CD9, CD81, PTGFRN and IGSF8 (By similarity). Interacts directly with IGSF8. Interacts with CD53 and SCIMP. Interacts with SAMHD1 (via its C-terminus) (By similarity). Interacts with glypican GPC3 and with the transcriptional repressor HHEX; binding to GPC3 decreases the availability of free CD81 for binding to HHEX, resulting in nuclear translocation of HHEX and transcriptional repression (By similarity). Interacts with CLDN1. Interacts with CLDN6 and CLDN9 (By similarity).</text>
</comment>
<comment type="subcellular location">
    <subcellularLocation>
        <location evidence="1">Cell membrane</location>
        <topology evidence="3">Multi-pass membrane protein</topology>
    </subcellularLocation>
    <subcellularLocation>
        <location evidence="2">Basolateral cell membrane</location>
        <topology evidence="3">Multi-pass membrane protein</topology>
    </subcellularLocation>
    <text evidence="2">Associates with CLDN1 and the CLDN1-CD81 complex localizes to the basolateral cell membrane.</text>
</comment>
<comment type="domain">
    <text evidence="2">Binds cholesterol in a cavity lined by the transmembrane spans.</text>
</comment>
<comment type="PTM">
    <text evidence="4">Not glycosylated.</text>
</comment>
<comment type="PTM">
    <text evidence="2">Likely constitutively palmitoylated at low levels. Protein palmitoylation is up-regulated upon coligation of BCR and CD9-C2R-CD81 complexes in lipid rafts.</text>
</comment>
<comment type="similarity">
    <text evidence="4">Belongs to the tetraspanin (TM4SF) family.</text>
</comment>
<name>CD81_SAGOE</name>
<gene>
    <name type="primary">CD81</name>
</gene>
<evidence type="ECO:0000250" key="1">
    <source>
        <dbReference type="UniProtKB" id="P35762"/>
    </source>
</evidence>
<evidence type="ECO:0000250" key="2">
    <source>
        <dbReference type="UniProtKB" id="P60033"/>
    </source>
</evidence>
<evidence type="ECO:0000255" key="3"/>
<evidence type="ECO:0000305" key="4"/>
<evidence type="ECO:0007829" key="5">
    <source>
        <dbReference type="PDB" id="7MWS"/>
    </source>
</evidence>
<keyword id="KW-0002">3D-structure</keyword>
<keyword id="KW-1064">Adaptive immunity</keyword>
<keyword id="KW-1003">Cell membrane</keyword>
<keyword id="KW-1015">Disulfide bond</keyword>
<keyword id="KW-0391">Immunity</keyword>
<keyword id="KW-0446">Lipid-binding</keyword>
<keyword id="KW-0472">Membrane</keyword>
<keyword id="KW-0812">Transmembrane</keyword>
<keyword id="KW-1133">Transmembrane helix</keyword>
<reference key="1">
    <citation type="journal article" date="2000" name="J. Virol.">
        <title>Binding of hepatitis C virus E2 glycoprotein to CD81 does not correlate with species permissiveness to infection.</title>
        <authorList>
            <person name="Meola A."/>
            <person name="Sbardellati A."/>
            <person name="Bruni E.B."/>
            <person name="Cerretani M."/>
            <person name="Pezzanera M."/>
            <person name="Ceccacci A."/>
            <person name="Vitelli A."/>
            <person name="Levy S."/>
            <person name="Nicosia A."/>
            <person name="Traboni C."/>
            <person name="McKeating J."/>
            <person name="Scarselli E."/>
        </authorList>
    </citation>
    <scope>NUCLEOTIDE SEQUENCE [MRNA]</scope>
    <source>
        <tissue>Liver</tissue>
    </source>
</reference>
<protein>
    <recommendedName>
        <fullName>CD81 protein</fullName>
    </recommendedName>
    <cdAntigenName>CD81</cdAntigenName>
</protein>
<organism>
    <name type="scientific">Saguinus oedipus</name>
    <name type="common">Cotton-top tamarin</name>
    <dbReference type="NCBI Taxonomy" id="9490"/>
    <lineage>
        <taxon>Eukaryota</taxon>
        <taxon>Metazoa</taxon>
        <taxon>Chordata</taxon>
        <taxon>Craniata</taxon>
        <taxon>Vertebrata</taxon>
        <taxon>Euteleostomi</taxon>
        <taxon>Mammalia</taxon>
        <taxon>Eutheria</taxon>
        <taxon>Euarchontoglires</taxon>
        <taxon>Primates</taxon>
        <taxon>Haplorrhini</taxon>
        <taxon>Platyrrhini</taxon>
        <taxon>Cebidae</taxon>
        <taxon>Callitrichinae</taxon>
        <taxon>Saguinus</taxon>
    </lineage>
</organism>
<dbReference type="EMBL" id="AJ250197">
    <property type="protein sequence ID" value="CAB89875.1"/>
    <property type="molecule type" value="mRNA"/>
</dbReference>
<dbReference type="PDB" id="7MWS">
    <property type="method" value="X-ray"/>
    <property type="resolution" value="1.80 A"/>
    <property type="chains" value="A/B=112-202"/>
</dbReference>
<dbReference type="PDB" id="7MWX">
    <property type="method" value="X-ray"/>
    <property type="resolution" value="3.32 A"/>
    <property type="chains" value="D/H=113-202"/>
</dbReference>
<dbReference type="PDBsum" id="7MWS"/>
<dbReference type="PDBsum" id="7MWX"/>
<dbReference type="SMR" id="Q9N0J9"/>
<dbReference type="GO" id="GO:0016323">
    <property type="term" value="C:basolateral plasma membrane"/>
    <property type="evidence" value="ECO:0007669"/>
    <property type="project" value="UniProtKB-SubCell"/>
</dbReference>
<dbReference type="GO" id="GO:0001772">
    <property type="term" value="C:immunological synapse"/>
    <property type="evidence" value="ECO:0000250"/>
    <property type="project" value="UniProtKB"/>
</dbReference>
<dbReference type="GO" id="GO:0016020">
    <property type="term" value="C:membrane"/>
    <property type="evidence" value="ECO:0000250"/>
    <property type="project" value="UniProtKB"/>
</dbReference>
<dbReference type="GO" id="GO:0005886">
    <property type="term" value="C:plasma membrane"/>
    <property type="evidence" value="ECO:0000250"/>
    <property type="project" value="UniProtKB"/>
</dbReference>
<dbReference type="GO" id="GO:0097197">
    <property type="term" value="C:tetraspanin-enriched microdomain"/>
    <property type="evidence" value="ECO:0000250"/>
    <property type="project" value="UniProtKB"/>
</dbReference>
<dbReference type="GO" id="GO:0015485">
    <property type="term" value="F:cholesterol binding"/>
    <property type="evidence" value="ECO:0000250"/>
    <property type="project" value="UniProtKB"/>
</dbReference>
<dbReference type="GO" id="GO:0005178">
    <property type="term" value="F:integrin binding"/>
    <property type="evidence" value="ECO:0000250"/>
    <property type="project" value="UniProtKB"/>
</dbReference>
<dbReference type="GO" id="GO:0035783">
    <property type="term" value="P:CD4-positive, alpha-beta T cell costimulation"/>
    <property type="evidence" value="ECO:0000250"/>
    <property type="project" value="UniProtKB"/>
</dbReference>
<dbReference type="GO" id="GO:0071404">
    <property type="term" value="P:cellular response to low-density lipoprotein particle stimulus"/>
    <property type="evidence" value="ECO:0000250"/>
    <property type="project" value="UniProtKB"/>
</dbReference>
<dbReference type="GO" id="GO:0002455">
    <property type="term" value="P:humoral immune response mediated by circulating immunoglobulin"/>
    <property type="evidence" value="ECO:0000250"/>
    <property type="project" value="UniProtKB"/>
</dbReference>
<dbReference type="GO" id="GO:0001771">
    <property type="term" value="P:immunological synapse formation"/>
    <property type="evidence" value="ECO:0000250"/>
    <property type="project" value="UniProtKB"/>
</dbReference>
<dbReference type="GO" id="GO:0034238">
    <property type="term" value="P:macrophage fusion"/>
    <property type="evidence" value="ECO:0000250"/>
    <property type="project" value="UniProtKB"/>
</dbReference>
<dbReference type="GO" id="GO:0014905">
    <property type="term" value="P:myoblast fusion involved in skeletal muscle regeneration"/>
    <property type="evidence" value="ECO:0000250"/>
    <property type="project" value="UniProtKB"/>
</dbReference>
<dbReference type="GO" id="GO:0072675">
    <property type="term" value="P:osteoclast fusion"/>
    <property type="evidence" value="ECO:0000250"/>
    <property type="project" value="UniProtKB"/>
</dbReference>
<dbReference type="GO" id="GO:0050871">
    <property type="term" value="P:positive regulation of B cell activation"/>
    <property type="evidence" value="ECO:0000250"/>
    <property type="project" value="UniProtKB"/>
</dbReference>
<dbReference type="GO" id="GO:0050861">
    <property type="term" value="P:positive regulation of B cell receptor signaling pathway"/>
    <property type="evidence" value="ECO:0000250"/>
    <property type="project" value="UniProtKB"/>
</dbReference>
<dbReference type="GO" id="GO:2000563">
    <property type="term" value="P:positive regulation of CD4-positive, alpha-beta T cell proliferation"/>
    <property type="evidence" value="ECO:0000250"/>
    <property type="project" value="UniProtKB"/>
</dbReference>
<dbReference type="GO" id="GO:0002863">
    <property type="term" value="P:positive regulation of inflammatory response to antigenic stimulus"/>
    <property type="evidence" value="ECO:0000250"/>
    <property type="project" value="UniProtKB"/>
</dbReference>
<dbReference type="GO" id="GO:0043410">
    <property type="term" value="P:positive regulation of MAPK cascade"/>
    <property type="evidence" value="ECO:0000250"/>
    <property type="project" value="UniProtKB"/>
</dbReference>
<dbReference type="GO" id="GO:0070863">
    <property type="term" value="P:positive regulation of protein exit from endoplasmic reticulum"/>
    <property type="evidence" value="ECO:0000250"/>
    <property type="project" value="UniProtKB"/>
</dbReference>
<dbReference type="GO" id="GO:1903911">
    <property type="term" value="P:positive regulation of receptor clustering"/>
    <property type="evidence" value="ECO:0000250"/>
    <property type="project" value="UniProtKB"/>
</dbReference>
<dbReference type="GO" id="GO:2001190">
    <property type="term" value="P:positive regulation of T cell activation via T cell receptor contact with antigen bound to MHC molecule on antigen presenting cell"/>
    <property type="evidence" value="ECO:0000250"/>
    <property type="project" value="UniProtKB"/>
</dbReference>
<dbReference type="GO" id="GO:0050862">
    <property type="term" value="P:positive regulation of T cell receptor signaling pathway"/>
    <property type="evidence" value="ECO:0000250"/>
    <property type="project" value="UniProtKB"/>
</dbReference>
<dbReference type="GO" id="GO:2000553">
    <property type="term" value="P:positive regulation of T-helper 2 cell cytokine production"/>
    <property type="evidence" value="ECO:0000250"/>
    <property type="project" value="UniProtKB"/>
</dbReference>
<dbReference type="GO" id="GO:0072659">
    <property type="term" value="P:protein localization to plasma membrane"/>
    <property type="evidence" value="ECO:0000250"/>
    <property type="project" value="UniProtKB"/>
</dbReference>
<dbReference type="GO" id="GO:0031623">
    <property type="term" value="P:receptor internalization"/>
    <property type="evidence" value="ECO:0000250"/>
    <property type="project" value="UniProtKB"/>
</dbReference>
<dbReference type="GO" id="GO:1905521">
    <property type="term" value="P:regulation of macrophage migration"/>
    <property type="evidence" value="ECO:0000250"/>
    <property type="project" value="UniProtKB"/>
</dbReference>
<dbReference type="CDD" id="cd03151">
    <property type="entry name" value="CD81_like_LEL"/>
    <property type="match status" value="1"/>
</dbReference>
<dbReference type="FunFam" id="1.10.1450.10:FF:000010">
    <property type="entry name" value="Tetraspanin"/>
    <property type="match status" value="1"/>
</dbReference>
<dbReference type="Gene3D" id="1.10.1450.10">
    <property type="entry name" value="Tetraspanin"/>
    <property type="match status" value="1"/>
</dbReference>
<dbReference type="InterPro" id="IPR018499">
    <property type="entry name" value="Tetraspanin/Peripherin"/>
</dbReference>
<dbReference type="InterPro" id="IPR000301">
    <property type="entry name" value="Tetraspanin_animals"/>
</dbReference>
<dbReference type="InterPro" id="IPR018503">
    <property type="entry name" value="Tetraspanin_CS"/>
</dbReference>
<dbReference type="InterPro" id="IPR008952">
    <property type="entry name" value="Tetraspanin_EC2_sf"/>
</dbReference>
<dbReference type="PANTHER" id="PTHR19282:SF214">
    <property type="entry name" value="CD81 ANTIGEN"/>
    <property type="match status" value="1"/>
</dbReference>
<dbReference type="PANTHER" id="PTHR19282">
    <property type="entry name" value="TETRASPANIN"/>
    <property type="match status" value="1"/>
</dbReference>
<dbReference type="Pfam" id="PF00335">
    <property type="entry name" value="Tetraspanin"/>
    <property type="match status" value="1"/>
</dbReference>
<dbReference type="PIRSF" id="PIRSF002419">
    <property type="entry name" value="Tetraspanin"/>
    <property type="match status" value="1"/>
</dbReference>
<dbReference type="PRINTS" id="PR00259">
    <property type="entry name" value="TMFOUR"/>
</dbReference>
<dbReference type="SUPFAM" id="SSF48652">
    <property type="entry name" value="Tetraspanin"/>
    <property type="match status" value="1"/>
</dbReference>
<dbReference type="PROSITE" id="PS00421">
    <property type="entry name" value="TM4_1"/>
    <property type="match status" value="1"/>
</dbReference>